<gene>
    <name type="primary">Ptrh2</name>
    <name type="synonym">Pth2</name>
</gene>
<dbReference type="EC" id="3.1.1.29" evidence="2"/>
<dbReference type="EMBL" id="AK028555">
    <property type="protein sequence ID" value="BAC26006.1"/>
    <property type="status" value="ALT_INIT"/>
    <property type="molecule type" value="mRNA"/>
</dbReference>
<dbReference type="EMBL" id="AK031620">
    <property type="protein sequence ID" value="BAC27482.1"/>
    <property type="molecule type" value="mRNA"/>
</dbReference>
<dbReference type="EMBL" id="AK038888">
    <property type="protein sequence ID" value="BAC30159.1"/>
    <property type="molecule type" value="mRNA"/>
</dbReference>
<dbReference type="EMBL" id="BC026947">
    <property type="protein sequence ID" value="AAH26947.1"/>
    <property type="molecule type" value="mRNA"/>
</dbReference>
<dbReference type="CCDS" id="CCDS48876.1"/>
<dbReference type="RefSeq" id="NP_001092280.1">
    <property type="nucleotide sequence ID" value="NM_001098810.3"/>
</dbReference>
<dbReference type="RefSeq" id="NP_778169.1">
    <property type="nucleotide sequence ID" value="NM_175004.2"/>
</dbReference>
<dbReference type="SMR" id="Q8R2Y8"/>
<dbReference type="BioGRID" id="229838">
    <property type="interactions" value="4"/>
</dbReference>
<dbReference type="FunCoup" id="Q8R2Y8">
    <property type="interactions" value="4431"/>
</dbReference>
<dbReference type="STRING" id="10090.ENSMUSP00000103656"/>
<dbReference type="iPTMnet" id="Q8R2Y8"/>
<dbReference type="PhosphoSitePlus" id="Q8R2Y8"/>
<dbReference type="SwissPalm" id="Q8R2Y8"/>
<dbReference type="jPOST" id="Q8R2Y8"/>
<dbReference type="PaxDb" id="10090-ENSMUSP00000103657"/>
<dbReference type="PeptideAtlas" id="Q8R2Y8"/>
<dbReference type="ProteomicsDB" id="291620"/>
<dbReference type="Pumba" id="Q8R2Y8"/>
<dbReference type="Antibodypedia" id="2479">
    <property type="antibodies" value="381 antibodies from 37 providers"/>
</dbReference>
<dbReference type="DNASU" id="217057"/>
<dbReference type="Ensembl" id="ENSMUST00000108021.2">
    <property type="protein sequence ID" value="ENSMUSP00000103656.2"/>
    <property type="gene ID" value="ENSMUSG00000072582.10"/>
</dbReference>
<dbReference type="Ensembl" id="ENSMUST00000108022.8">
    <property type="protein sequence ID" value="ENSMUSP00000103657.2"/>
    <property type="gene ID" value="ENSMUSG00000072582.10"/>
</dbReference>
<dbReference type="GeneID" id="217057"/>
<dbReference type="KEGG" id="mmu:217057"/>
<dbReference type="UCSC" id="uc007ksy.1">
    <property type="organism name" value="mouse"/>
</dbReference>
<dbReference type="AGR" id="MGI:2444848"/>
<dbReference type="CTD" id="51651"/>
<dbReference type="MGI" id="MGI:2444848">
    <property type="gene designation" value="Ptrh2"/>
</dbReference>
<dbReference type="VEuPathDB" id="HostDB:ENSMUSG00000072582"/>
<dbReference type="eggNOG" id="KOG3282">
    <property type="taxonomic scope" value="Eukaryota"/>
</dbReference>
<dbReference type="GeneTree" id="ENSGT00390000015991"/>
<dbReference type="HOGENOM" id="CLU_073661_1_1_1"/>
<dbReference type="InParanoid" id="Q8R2Y8"/>
<dbReference type="OMA" id="GHAAVEC"/>
<dbReference type="OrthoDB" id="1733656at2759"/>
<dbReference type="PhylomeDB" id="Q8R2Y8"/>
<dbReference type="TreeFam" id="TF324583"/>
<dbReference type="Reactome" id="R-MMU-5689880">
    <property type="pathway name" value="Ub-specific processing proteases"/>
</dbReference>
<dbReference type="BioGRID-ORCS" id="217057">
    <property type="hits" value="4 hits in 79 CRISPR screens"/>
</dbReference>
<dbReference type="PRO" id="PR:Q8R2Y8"/>
<dbReference type="Proteomes" id="UP000000589">
    <property type="component" value="Chromosome 11"/>
</dbReference>
<dbReference type="RNAct" id="Q8R2Y8">
    <property type="molecule type" value="protein"/>
</dbReference>
<dbReference type="Bgee" id="ENSMUSG00000072582">
    <property type="expression patterns" value="Expressed in floor plate of midbrain and 255 other cell types or tissues"/>
</dbReference>
<dbReference type="GO" id="GO:0005829">
    <property type="term" value="C:cytosol"/>
    <property type="evidence" value="ECO:0007669"/>
    <property type="project" value="Ensembl"/>
</dbReference>
<dbReference type="GO" id="GO:0005741">
    <property type="term" value="C:mitochondrial outer membrane"/>
    <property type="evidence" value="ECO:0000250"/>
    <property type="project" value="UniProtKB"/>
</dbReference>
<dbReference type="GO" id="GO:0005739">
    <property type="term" value="C:mitochondrion"/>
    <property type="evidence" value="ECO:0007005"/>
    <property type="project" value="MGI"/>
</dbReference>
<dbReference type="GO" id="GO:0004045">
    <property type="term" value="F:peptidyl-tRNA hydrolase activity"/>
    <property type="evidence" value="ECO:0007669"/>
    <property type="project" value="UniProtKB-EC"/>
</dbReference>
<dbReference type="GO" id="GO:2000811">
    <property type="term" value="P:negative regulation of anoikis"/>
    <property type="evidence" value="ECO:0007669"/>
    <property type="project" value="Ensembl"/>
</dbReference>
<dbReference type="GO" id="GO:0010629">
    <property type="term" value="P:negative regulation of gene expression"/>
    <property type="evidence" value="ECO:0007669"/>
    <property type="project" value="Ensembl"/>
</dbReference>
<dbReference type="GO" id="GO:2000210">
    <property type="term" value="P:positive regulation of anoikis"/>
    <property type="evidence" value="ECO:0007669"/>
    <property type="project" value="Ensembl"/>
</dbReference>
<dbReference type="CDD" id="cd02430">
    <property type="entry name" value="PTH2"/>
    <property type="match status" value="1"/>
</dbReference>
<dbReference type="FunFam" id="3.40.1490.10:FF:000001">
    <property type="entry name" value="Peptidyl-tRNA hydrolase 2"/>
    <property type="match status" value="1"/>
</dbReference>
<dbReference type="Gene3D" id="3.40.1490.10">
    <property type="entry name" value="Bit1"/>
    <property type="match status" value="1"/>
</dbReference>
<dbReference type="InterPro" id="IPR023476">
    <property type="entry name" value="Pep_tRNA_hydro_II_dom_sf"/>
</dbReference>
<dbReference type="InterPro" id="IPR002833">
    <property type="entry name" value="PTH2"/>
</dbReference>
<dbReference type="NCBIfam" id="TIGR00283">
    <property type="entry name" value="arch_pth2"/>
    <property type="match status" value="1"/>
</dbReference>
<dbReference type="NCBIfam" id="NF003314">
    <property type="entry name" value="PRK04322.1"/>
    <property type="match status" value="1"/>
</dbReference>
<dbReference type="PANTHER" id="PTHR12649">
    <property type="entry name" value="PEPTIDYL-TRNA HYDROLASE 2"/>
    <property type="match status" value="1"/>
</dbReference>
<dbReference type="PANTHER" id="PTHR12649:SF11">
    <property type="entry name" value="PEPTIDYL-TRNA HYDROLASE 2, MITOCHONDRIAL"/>
    <property type="match status" value="1"/>
</dbReference>
<dbReference type="Pfam" id="PF01981">
    <property type="entry name" value="PTH2"/>
    <property type="match status" value="1"/>
</dbReference>
<dbReference type="SUPFAM" id="SSF102462">
    <property type="entry name" value="Peptidyl-tRNA hydrolase II"/>
    <property type="match status" value="1"/>
</dbReference>
<sequence>MLSKFLTMEYLVHPGTLSLAAGVACGMCLGWGLRSHLGMFPQNSTSEANRDTETGTEASILGESGEYKMILVVRTDLKMGKGKVAAQCSHAAVSAYKQTQRRSPQVLKEWEYCGQPKVVVKAPDEDTLIQLLTHAKTLGLTVSLIQDAGRTQIEPGSRTVLGIGPGPVELIDEVTGHLKLY</sequence>
<proteinExistence type="evidence at protein level"/>
<reference key="1">
    <citation type="journal article" date="2005" name="Science">
        <title>The transcriptional landscape of the mammalian genome.</title>
        <authorList>
            <person name="Carninci P."/>
            <person name="Kasukawa T."/>
            <person name="Katayama S."/>
            <person name="Gough J."/>
            <person name="Frith M.C."/>
            <person name="Maeda N."/>
            <person name="Oyama R."/>
            <person name="Ravasi T."/>
            <person name="Lenhard B."/>
            <person name="Wells C."/>
            <person name="Kodzius R."/>
            <person name="Shimokawa K."/>
            <person name="Bajic V.B."/>
            <person name="Brenner S.E."/>
            <person name="Batalov S."/>
            <person name="Forrest A.R."/>
            <person name="Zavolan M."/>
            <person name="Davis M.J."/>
            <person name="Wilming L.G."/>
            <person name="Aidinis V."/>
            <person name="Allen J.E."/>
            <person name="Ambesi-Impiombato A."/>
            <person name="Apweiler R."/>
            <person name="Aturaliya R.N."/>
            <person name="Bailey T.L."/>
            <person name="Bansal M."/>
            <person name="Baxter L."/>
            <person name="Beisel K.W."/>
            <person name="Bersano T."/>
            <person name="Bono H."/>
            <person name="Chalk A.M."/>
            <person name="Chiu K.P."/>
            <person name="Choudhary V."/>
            <person name="Christoffels A."/>
            <person name="Clutterbuck D.R."/>
            <person name="Crowe M.L."/>
            <person name="Dalla E."/>
            <person name="Dalrymple B.P."/>
            <person name="de Bono B."/>
            <person name="Della Gatta G."/>
            <person name="di Bernardo D."/>
            <person name="Down T."/>
            <person name="Engstrom P."/>
            <person name="Fagiolini M."/>
            <person name="Faulkner G."/>
            <person name="Fletcher C.F."/>
            <person name="Fukushima T."/>
            <person name="Furuno M."/>
            <person name="Futaki S."/>
            <person name="Gariboldi M."/>
            <person name="Georgii-Hemming P."/>
            <person name="Gingeras T.R."/>
            <person name="Gojobori T."/>
            <person name="Green R.E."/>
            <person name="Gustincich S."/>
            <person name="Harbers M."/>
            <person name="Hayashi Y."/>
            <person name="Hensch T.K."/>
            <person name="Hirokawa N."/>
            <person name="Hill D."/>
            <person name="Huminiecki L."/>
            <person name="Iacono M."/>
            <person name="Ikeo K."/>
            <person name="Iwama A."/>
            <person name="Ishikawa T."/>
            <person name="Jakt M."/>
            <person name="Kanapin A."/>
            <person name="Katoh M."/>
            <person name="Kawasawa Y."/>
            <person name="Kelso J."/>
            <person name="Kitamura H."/>
            <person name="Kitano H."/>
            <person name="Kollias G."/>
            <person name="Krishnan S.P."/>
            <person name="Kruger A."/>
            <person name="Kummerfeld S.K."/>
            <person name="Kurochkin I.V."/>
            <person name="Lareau L.F."/>
            <person name="Lazarevic D."/>
            <person name="Lipovich L."/>
            <person name="Liu J."/>
            <person name="Liuni S."/>
            <person name="McWilliam S."/>
            <person name="Madan Babu M."/>
            <person name="Madera M."/>
            <person name="Marchionni L."/>
            <person name="Matsuda H."/>
            <person name="Matsuzawa S."/>
            <person name="Miki H."/>
            <person name="Mignone F."/>
            <person name="Miyake S."/>
            <person name="Morris K."/>
            <person name="Mottagui-Tabar S."/>
            <person name="Mulder N."/>
            <person name="Nakano N."/>
            <person name="Nakauchi H."/>
            <person name="Ng P."/>
            <person name="Nilsson R."/>
            <person name="Nishiguchi S."/>
            <person name="Nishikawa S."/>
            <person name="Nori F."/>
            <person name="Ohara O."/>
            <person name="Okazaki Y."/>
            <person name="Orlando V."/>
            <person name="Pang K.C."/>
            <person name="Pavan W.J."/>
            <person name="Pavesi G."/>
            <person name="Pesole G."/>
            <person name="Petrovsky N."/>
            <person name="Piazza S."/>
            <person name="Reed J."/>
            <person name="Reid J.F."/>
            <person name="Ring B.Z."/>
            <person name="Ringwald M."/>
            <person name="Rost B."/>
            <person name="Ruan Y."/>
            <person name="Salzberg S.L."/>
            <person name="Sandelin A."/>
            <person name="Schneider C."/>
            <person name="Schoenbach C."/>
            <person name="Sekiguchi K."/>
            <person name="Semple C.A."/>
            <person name="Seno S."/>
            <person name="Sessa L."/>
            <person name="Sheng Y."/>
            <person name="Shibata Y."/>
            <person name="Shimada H."/>
            <person name="Shimada K."/>
            <person name="Silva D."/>
            <person name="Sinclair B."/>
            <person name="Sperling S."/>
            <person name="Stupka E."/>
            <person name="Sugiura K."/>
            <person name="Sultana R."/>
            <person name="Takenaka Y."/>
            <person name="Taki K."/>
            <person name="Tammoja K."/>
            <person name="Tan S.L."/>
            <person name="Tang S."/>
            <person name="Taylor M.S."/>
            <person name="Tegner J."/>
            <person name="Teichmann S.A."/>
            <person name="Ueda H.R."/>
            <person name="van Nimwegen E."/>
            <person name="Verardo R."/>
            <person name="Wei C.L."/>
            <person name="Yagi K."/>
            <person name="Yamanishi H."/>
            <person name="Zabarovsky E."/>
            <person name="Zhu S."/>
            <person name="Zimmer A."/>
            <person name="Hide W."/>
            <person name="Bult C."/>
            <person name="Grimmond S.M."/>
            <person name="Teasdale R.D."/>
            <person name="Liu E.T."/>
            <person name="Brusic V."/>
            <person name="Quackenbush J."/>
            <person name="Wahlestedt C."/>
            <person name="Mattick J.S."/>
            <person name="Hume D.A."/>
            <person name="Kai C."/>
            <person name="Sasaki D."/>
            <person name="Tomaru Y."/>
            <person name="Fukuda S."/>
            <person name="Kanamori-Katayama M."/>
            <person name="Suzuki M."/>
            <person name="Aoki J."/>
            <person name="Arakawa T."/>
            <person name="Iida J."/>
            <person name="Imamura K."/>
            <person name="Itoh M."/>
            <person name="Kato T."/>
            <person name="Kawaji H."/>
            <person name="Kawagashira N."/>
            <person name="Kawashima T."/>
            <person name="Kojima M."/>
            <person name="Kondo S."/>
            <person name="Konno H."/>
            <person name="Nakano K."/>
            <person name="Ninomiya N."/>
            <person name="Nishio T."/>
            <person name="Okada M."/>
            <person name="Plessy C."/>
            <person name="Shibata K."/>
            <person name="Shiraki T."/>
            <person name="Suzuki S."/>
            <person name="Tagami M."/>
            <person name="Waki K."/>
            <person name="Watahiki A."/>
            <person name="Okamura-Oho Y."/>
            <person name="Suzuki H."/>
            <person name="Kawai J."/>
            <person name="Hayashizaki Y."/>
        </authorList>
    </citation>
    <scope>NUCLEOTIDE SEQUENCE [LARGE SCALE MRNA]</scope>
    <source>
        <strain>C57BL/6J</strain>
        <tissue>Hypothalamus</tissue>
        <tissue>Skin</tissue>
        <tissue>Testis</tissue>
    </source>
</reference>
<reference key="2">
    <citation type="journal article" date="2004" name="Genome Res.">
        <title>The status, quality, and expansion of the NIH full-length cDNA project: the Mammalian Gene Collection (MGC).</title>
        <authorList>
            <consortium name="The MGC Project Team"/>
        </authorList>
    </citation>
    <scope>NUCLEOTIDE SEQUENCE [LARGE SCALE MRNA]</scope>
</reference>
<reference key="3">
    <citation type="journal article" date="2010" name="Cell">
        <title>A tissue-specific atlas of mouse protein phosphorylation and expression.</title>
        <authorList>
            <person name="Huttlin E.L."/>
            <person name="Jedrychowski M.P."/>
            <person name="Elias J.E."/>
            <person name="Goswami T."/>
            <person name="Rad R."/>
            <person name="Beausoleil S.A."/>
            <person name="Villen J."/>
            <person name="Haas W."/>
            <person name="Sowa M.E."/>
            <person name="Gygi S.P."/>
        </authorList>
    </citation>
    <scope>IDENTIFICATION BY MASS SPECTROMETRY [LARGE SCALE ANALYSIS]</scope>
    <source>
        <tissue>Brain</tissue>
        <tissue>Brown adipose tissue</tissue>
        <tissue>Heart</tissue>
        <tissue>Kidney</tissue>
        <tissue>Liver</tissue>
        <tissue>Lung</tissue>
        <tissue>Pancreas</tissue>
        <tissue>Spleen</tissue>
        <tissue>Testis</tissue>
    </source>
</reference>
<feature type="chain" id="PRO_0000029863" description="Peptidyl-tRNA hydrolase 2, mitochondrial">
    <location>
        <begin position="1"/>
        <end position="181"/>
    </location>
</feature>
<feature type="transmembrane region" description="Helical" evidence="3">
    <location>
        <begin position="10"/>
        <end position="32"/>
    </location>
</feature>
<feature type="cross-link" description="Glycyl lysine isopeptide (Lys-Gly) (interchain with G-Cter in ubiquitin)" evidence="2">
    <location>
        <position position="78"/>
    </location>
</feature>
<feature type="cross-link" description="Glycyl lysine isopeptide (Lys-Gly) (interchain with G-Cter in ubiquitin)" evidence="2">
    <location>
        <position position="83"/>
    </location>
</feature>
<feature type="cross-link" description="Glycyl lysine isopeptide (Lys-Gly) (interchain with G-Cter in ubiquitin)" evidence="2">
    <location>
        <position position="97"/>
    </location>
</feature>
<feature type="cross-link" description="Glycyl lysine isopeptide (Lys-Gly) (interchain with G-Cter in ubiquitin)" evidence="2">
    <location>
        <position position="108"/>
    </location>
</feature>
<feature type="cross-link" description="Glycyl lysine isopeptide (Lys-Gly) (interchain with G-Cter in ubiquitin)" evidence="2">
    <location>
        <position position="117"/>
    </location>
</feature>
<feature type="cross-link" description="Glycyl lysine isopeptide (Lys-Gly) (interchain with G-Cter in ubiquitin)" evidence="2">
    <location>
        <position position="179"/>
    </location>
</feature>
<feature type="sequence conflict" description="In Ref. 1; BAC30159." evidence="4" ref="1">
    <original>I</original>
    <variation>T</variation>
    <location>
        <position position="171"/>
    </location>
</feature>
<organism>
    <name type="scientific">Mus musculus</name>
    <name type="common">Mouse</name>
    <dbReference type="NCBI Taxonomy" id="10090"/>
    <lineage>
        <taxon>Eukaryota</taxon>
        <taxon>Metazoa</taxon>
        <taxon>Chordata</taxon>
        <taxon>Craniata</taxon>
        <taxon>Vertebrata</taxon>
        <taxon>Euteleostomi</taxon>
        <taxon>Mammalia</taxon>
        <taxon>Eutheria</taxon>
        <taxon>Euarchontoglires</taxon>
        <taxon>Glires</taxon>
        <taxon>Rodentia</taxon>
        <taxon>Myomorpha</taxon>
        <taxon>Muroidea</taxon>
        <taxon>Muridae</taxon>
        <taxon>Murinae</taxon>
        <taxon>Mus</taxon>
        <taxon>Mus</taxon>
    </lineage>
</organism>
<keyword id="KW-0378">Hydrolase</keyword>
<keyword id="KW-1017">Isopeptide bond</keyword>
<keyword id="KW-0472">Membrane</keyword>
<keyword id="KW-0496">Mitochondrion</keyword>
<keyword id="KW-1000">Mitochondrion outer membrane</keyword>
<keyword id="KW-1185">Reference proteome</keyword>
<keyword id="KW-0812">Transmembrane</keyword>
<keyword id="KW-1133">Transmembrane helix</keyword>
<keyword id="KW-0832">Ubl conjugation</keyword>
<protein>
    <recommendedName>
        <fullName>Peptidyl-tRNA hydrolase 2, mitochondrial</fullName>
        <shortName>PTH 2</shortName>
        <ecNumber evidence="2">3.1.1.29</ecNumber>
    </recommendedName>
</protein>
<comment type="function">
    <text evidence="2">Peptidyl-tRNA hydrolase which releases tRNAs from the ribosome during protein synthesis. Promotes caspase-independent apoptosis by regulating the function of two transcriptional regulators, AES and TLE1.</text>
</comment>
<comment type="catalytic activity">
    <reaction evidence="2">
        <text>an N-acyl-L-alpha-aminoacyl-tRNA + H2O = an N-acyl-L-amino acid + a tRNA + H(+)</text>
        <dbReference type="Rhea" id="RHEA:54448"/>
        <dbReference type="Rhea" id="RHEA-COMP:10123"/>
        <dbReference type="Rhea" id="RHEA-COMP:13883"/>
        <dbReference type="ChEBI" id="CHEBI:15377"/>
        <dbReference type="ChEBI" id="CHEBI:15378"/>
        <dbReference type="ChEBI" id="CHEBI:59874"/>
        <dbReference type="ChEBI" id="CHEBI:78442"/>
        <dbReference type="ChEBI" id="CHEBI:138191"/>
        <dbReference type="EC" id="3.1.1.29"/>
    </reaction>
</comment>
<comment type="subunit">
    <text evidence="1">Monomer.</text>
</comment>
<comment type="subcellular location">
    <subcellularLocation>
        <location evidence="2">Mitochondrion outer membrane</location>
        <topology evidence="3">Single-pass membrane protein</topology>
    </subcellularLocation>
</comment>
<comment type="PTM">
    <text evidence="2">Ubiquitinated by PRKN during mitophagy, leading to its degradation and enhancement of mitophagy. Deubiquitinated by USP30.</text>
</comment>
<comment type="similarity">
    <text evidence="4">Belongs to the PTH2 family.</text>
</comment>
<comment type="sequence caution" evidence="4">
    <conflict type="erroneous initiation">
        <sequence resource="EMBL-CDS" id="BAC26006"/>
    </conflict>
</comment>
<name>PTH2_MOUSE</name>
<accession>Q8R2Y8</accession>
<accession>Q8BI01</accession>
<accession>Q8BI31</accession>
<evidence type="ECO:0000250" key="1"/>
<evidence type="ECO:0000250" key="2">
    <source>
        <dbReference type="UniProtKB" id="Q9Y3E5"/>
    </source>
</evidence>
<evidence type="ECO:0000255" key="3"/>
<evidence type="ECO:0000305" key="4"/>